<dbReference type="EC" id="2.1.1.242" evidence="1"/>
<dbReference type="EMBL" id="CP000970">
    <property type="protein sequence ID" value="ACB19262.1"/>
    <property type="molecule type" value="Genomic_DNA"/>
</dbReference>
<dbReference type="RefSeq" id="WP_000686620.1">
    <property type="nucleotide sequence ID" value="NC_010498.1"/>
</dbReference>
<dbReference type="SMR" id="B1LIG5"/>
<dbReference type="KEGG" id="ecm:EcSMS35_3786"/>
<dbReference type="HOGENOM" id="CLU_076324_0_0_6"/>
<dbReference type="Proteomes" id="UP000007011">
    <property type="component" value="Chromosome"/>
</dbReference>
<dbReference type="GO" id="GO:0005737">
    <property type="term" value="C:cytoplasm"/>
    <property type="evidence" value="ECO:0007669"/>
    <property type="project" value="UniProtKB-SubCell"/>
</dbReference>
<dbReference type="GO" id="GO:0008990">
    <property type="term" value="F:rRNA (guanine-N2-)-methyltransferase activity"/>
    <property type="evidence" value="ECO:0007669"/>
    <property type="project" value="UniProtKB-UniRule"/>
</dbReference>
<dbReference type="CDD" id="cd02440">
    <property type="entry name" value="AdoMet_MTases"/>
    <property type="match status" value="1"/>
</dbReference>
<dbReference type="FunFam" id="3.40.1630.10:FF:000001">
    <property type="entry name" value="Ribosomal RNA small subunit methyltransferase J"/>
    <property type="match status" value="1"/>
</dbReference>
<dbReference type="FunFam" id="3.40.50.150:FF:000072">
    <property type="entry name" value="Ribosomal RNA small subunit methyltransferase J"/>
    <property type="match status" value="1"/>
</dbReference>
<dbReference type="Gene3D" id="3.40.50.150">
    <property type="entry name" value="Vaccinia Virus protein VP39"/>
    <property type="match status" value="1"/>
</dbReference>
<dbReference type="Gene3D" id="3.40.1630.10">
    <property type="entry name" value="YhiQ-like domain"/>
    <property type="match status" value="1"/>
</dbReference>
<dbReference type="HAMAP" id="MF_01523">
    <property type="entry name" value="16SrRNA_methyltr_J"/>
    <property type="match status" value="1"/>
</dbReference>
<dbReference type="InterPro" id="IPR007536">
    <property type="entry name" value="16SrRNA_methylTrfase_J"/>
</dbReference>
<dbReference type="InterPro" id="IPR029063">
    <property type="entry name" value="SAM-dependent_MTases_sf"/>
</dbReference>
<dbReference type="NCBIfam" id="NF008012">
    <property type="entry name" value="PRK10742.1"/>
    <property type="match status" value="1"/>
</dbReference>
<dbReference type="PANTHER" id="PTHR36112">
    <property type="entry name" value="RIBOSOMAL RNA SMALL SUBUNIT METHYLTRANSFERASE J"/>
    <property type="match status" value="1"/>
</dbReference>
<dbReference type="PANTHER" id="PTHR36112:SF1">
    <property type="entry name" value="RIBOSOMAL RNA SMALL SUBUNIT METHYLTRANSFERASE J"/>
    <property type="match status" value="1"/>
</dbReference>
<dbReference type="Pfam" id="PF04445">
    <property type="entry name" value="SAM_MT"/>
    <property type="match status" value="1"/>
</dbReference>
<dbReference type="SUPFAM" id="SSF53335">
    <property type="entry name" value="S-adenosyl-L-methionine-dependent methyltransferases"/>
    <property type="match status" value="1"/>
</dbReference>
<sequence>MKICLIDETGTGDGALSVLAARWGLEHDEDNLMALVLTPEHLELRKRDEPKLGGIFVDFVGGAMAHRRKFGGGRGEAVAKAVGIKGDYLPDVVDATAGLGRDAFVLASVGCRVRMLERNPVVAALLDDGLARGYADAEIGGWLQERLQLIHASSLTALTDITPRPQVVYLDPMFPHKQKSALVKKEMRVFQSLVGPDLDADGLLEPARLLATKRVVVKRPDYAPPLANVATPNAVVTKGHRFDIYAGTPV</sequence>
<evidence type="ECO:0000255" key="1">
    <source>
        <dbReference type="HAMAP-Rule" id="MF_01523"/>
    </source>
</evidence>
<comment type="function">
    <text evidence="1">Specifically methylates the guanosine in position 1516 of 16S rRNA.</text>
</comment>
<comment type="catalytic activity">
    <reaction evidence="1">
        <text>guanosine(1516) in 16S rRNA + S-adenosyl-L-methionine = N(2)-methylguanosine(1516) in 16S rRNA + S-adenosyl-L-homocysteine + H(+)</text>
        <dbReference type="Rhea" id="RHEA:43220"/>
        <dbReference type="Rhea" id="RHEA-COMP:10412"/>
        <dbReference type="Rhea" id="RHEA-COMP:10413"/>
        <dbReference type="ChEBI" id="CHEBI:15378"/>
        <dbReference type="ChEBI" id="CHEBI:57856"/>
        <dbReference type="ChEBI" id="CHEBI:59789"/>
        <dbReference type="ChEBI" id="CHEBI:74269"/>
        <dbReference type="ChEBI" id="CHEBI:74481"/>
        <dbReference type="EC" id="2.1.1.242"/>
    </reaction>
</comment>
<comment type="subcellular location">
    <subcellularLocation>
        <location evidence="1">Cytoplasm</location>
    </subcellularLocation>
</comment>
<comment type="similarity">
    <text evidence="1">Belongs to the methyltransferase superfamily. RsmJ family.</text>
</comment>
<keyword id="KW-0963">Cytoplasm</keyword>
<keyword id="KW-0489">Methyltransferase</keyword>
<keyword id="KW-0698">rRNA processing</keyword>
<keyword id="KW-0949">S-adenosyl-L-methionine</keyword>
<keyword id="KW-0808">Transferase</keyword>
<accession>B1LIG5</accession>
<protein>
    <recommendedName>
        <fullName evidence="1">Ribosomal RNA small subunit methyltransferase J</fullName>
        <ecNumber evidence="1">2.1.1.242</ecNumber>
    </recommendedName>
    <alternativeName>
        <fullName evidence="1">16S rRNA m2G1516 methyltransferase</fullName>
    </alternativeName>
    <alternativeName>
        <fullName evidence="1">rRNA (guanine-N(2)-)-methyltransferase</fullName>
    </alternativeName>
</protein>
<organism>
    <name type="scientific">Escherichia coli (strain SMS-3-5 / SECEC)</name>
    <dbReference type="NCBI Taxonomy" id="439855"/>
    <lineage>
        <taxon>Bacteria</taxon>
        <taxon>Pseudomonadati</taxon>
        <taxon>Pseudomonadota</taxon>
        <taxon>Gammaproteobacteria</taxon>
        <taxon>Enterobacterales</taxon>
        <taxon>Enterobacteriaceae</taxon>
        <taxon>Escherichia</taxon>
    </lineage>
</organism>
<name>RSMJ_ECOSM</name>
<reference key="1">
    <citation type="journal article" date="2008" name="J. Bacteriol.">
        <title>Insights into the environmental resistance gene pool from the genome sequence of the multidrug-resistant environmental isolate Escherichia coli SMS-3-5.</title>
        <authorList>
            <person name="Fricke W.F."/>
            <person name="Wright M.S."/>
            <person name="Lindell A.H."/>
            <person name="Harkins D.M."/>
            <person name="Baker-Austin C."/>
            <person name="Ravel J."/>
            <person name="Stepanauskas R."/>
        </authorList>
    </citation>
    <scope>NUCLEOTIDE SEQUENCE [LARGE SCALE GENOMIC DNA]</scope>
    <source>
        <strain>SMS-3-5 / SECEC</strain>
    </source>
</reference>
<feature type="chain" id="PRO_1000198493" description="Ribosomal RNA small subunit methyltransferase J">
    <location>
        <begin position="1"/>
        <end position="250"/>
    </location>
</feature>
<feature type="binding site" evidence="1">
    <location>
        <begin position="101"/>
        <end position="102"/>
    </location>
    <ligand>
        <name>S-adenosyl-L-methionine</name>
        <dbReference type="ChEBI" id="CHEBI:59789"/>
    </ligand>
</feature>
<feature type="binding site" evidence="1">
    <location>
        <begin position="117"/>
        <end position="118"/>
    </location>
    <ligand>
        <name>S-adenosyl-L-methionine</name>
        <dbReference type="ChEBI" id="CHEBI:59789"/>
    </ligand>
</feature>
<feature type="binding site" evidence="1">
    <location>
        <begin position="153"/>
        <end position="154"/>
    </location>
    <ligand>
        <name>S-adenosyl-L-methionine</name>
        <dbReference type="ChEBI" id="CHEBI:59789"/>
    </ligand>
</feature>
<feature type="binding site" evidence="1">
    <location>
        <position position="171"/>
    </location>
    <ligand>
        <name>S-adenosyl-L-methionine</name>
        <dbReference type="ChEBI" id="CHEBI:59789"/>
    </ligand>
</feature>
<proteinExistence type="inferred from homology"/>
<gene>
    <name evidence="1" type="primary">rsmJ</name>
    <name type="synonym">yhiQ</name>
    <name type="ordered locus">EcSMS35_3786</name>
</gene>